<proteinExistence type="evidence at protein level"/>
<name>ALP11_SCHPO</name>
<sequence>MNEITLFIKSSSANAERRINPQWTVSQLKTKLVPIVGTPEQYQKLTYEPASSTVPGHVFTSEEENLDLGEFKLQPLGTIVVEDTRPPHLRLDFDDLSQVDKYVMPREQYENRTDSVYAWKKRNQLGRFNPDFEASKASRQESLKRELVDLQKNLNSRCCAAGERYGTIRYIGLVPEINNDNLWVGVEFDEPVGKNDGTVSGKRYFNAKNKHGSFLRSSEVEVGDFPPEDILEGL</sequence>
<protein>
    <recommendedName>
        <fullName>Cell polarity protein alp11</fullName>
    </recommendedName>
    <alternativeName>
        <fullName>Altered polarity protein 11</fullName>
    </alternativeName>
</protein>
<organism>
    <name type="scientific">Schizosaccharomyces pombe (strain 972 / ATCC 24843)</name>
    <name type="common">Fission yeast</name>
    <dbReference type="NCBI Taxonomy" id="284812"/>
    <lineage>
        <taxon>Eukaryota</taxon>
        <taxon>Fungi</taxon>
        <taxon>Dikarya</taxon>
        <taxon>Ascomycota</taxon>
        <taxon>Taphrinomycotina</taxon>
        <taxon>Schizosaccharomycetes</taxon>
        <taxon>Schizosaccharomycetales</taxon>
        <taxon>Schizosaccharomycetaceae</taxon>
        <taxon>Schizosaccharomyces</taxon>
    </lineage>
</organism>
<dbReference type="EMBL" id="AB008750">
    <property type="protein sequence ID" value="BAA23375.1"/>
    <property type="molecule type" value="Genomic_DNA"/>
</dbReference>
<dbReference type="EMBL" id="CU329670">
    <property type="protein sequence ID" value="CAB59431.2"/>
    <property type="molecule type" value="Genomic_DNA"/>
</dbReference>
<dbReference type="PIR" id="T43283">
    <property type="entry name" value="T43283"/>
</dbReference>
<dbReference type="RefSeq" id="NP_593683.2">
    <property type="nucleotide sequence ID" value="NM_001019115.2"/>
</dbReference>
<dbReference type="SMR" id="Q10235"/>
<dbReference type="BioGRID" id="279261">
    <property type="interactions" value="3"/>
</dbReference>
<dbReference type="FunCoup" id="Q10235">
    <property type="interactions" value="376"/>
</dbReference>
<dbReference type="STRING" id="284812.Q10235"/>
<dbReference type="iPTMnet" id="Q10235"/>
<dbReference type="PaxDb" id="4896-SPAC13D6.05.1"/>
<dbReference type="EnsemblFungi" id="SPAC13D6.05.1">
    <property type="protein sequence ID" value="SPAC13D6.05.1:pep"/>
    <property type="gene ID" value="SPAC13D6.05"/>
</dbReference>
<dbReference type="GeneID" id="2542814"/>
<dbReference type="KEGG" id="spo:2542814"/>
<dbReference type="PomBase" id="SPAC13D6.05">
    <property type="gene designation" value="alp11"/>
</dbReference>
<dbReference type="VEuPathDB" id="FungiDB:SPAC13D6.05"/>
<dbReference type="eggNOG" id="KOG3206">
    <property type="taxonomic scope" value="Eukaryota"/>
</dbReference>
<dbReference type="HOGENOM" id="CLU_067577_2_0_1"/>
<dbReference type="InParanoid" id="Q10235"/>
<dbReference type="OMA" id="DQYEQRT"/>
<dbReference type="PhylomeDB" id="Q10235"/>
<dbReference type="PRO" id="PR:Q10235"/>
<dbReference type="Proteomes" id="UP000002485">
    <property type="component" value="Chromosome I"/>
</dbReference>
<dbReference type="GO" id="GO:0005938">
    <property type="term" value="C:cell cortex"/>
    <property type="evidence" value="ECO:0000318"/>
    <property type="project" value="GO_Central"/>
</dbReference>
<dbReference type="GO" id="GO:0005737">
    <property type="term" value="C:cytoplasm"/>
    <property type="evidence" value="ECO:0000314"/>
    <property type="project" value="PomBase"/>
</dbReference>
<dbReference type="GO" id="GO:0005829">
    <property type="term" value="C:cytosol"/>
    <property type="evidence" value="ECO:0007005"/>
    <property type="project" value="PomBase"/>
</dbReference>
<dbReference type="GO" id="GO:0035371">
    <property type="term" value="C:microtubule plus-end"/>
    <property type="evidence" value="ECO:0000318"/>
    <property type="project" value="GO_Central"/>
</dbReference>
<dbReference type="GO" id="GO:0005634">
    <property type="term" value="C:nucleus"/>
    <property type="evidence" value="ECO:0007005"/>
    <property type="project" value="PomBase"/>
</dbReference>
<dbReference type="GO" id="GO:0051010">
    <property type="term" value="F:microtubule plus-end binding"/>
    <property type="evidence" value="ECO:0000318"/>
    <property type="project" value="GO_Central"/>
</dbReference>
<dbReference type="GO" id="GO:0031122">
    <property type="term" value="P:cytoplasmic microtubule organization"/>
    <property type="evidence" value="ECO:0000315"/>
    <property type="project" value="PomBase"/>
</dbReference>
<dbReference type="GO" id="GO:0007021">
    <property type="term" value="P:tubulin complex assembly"/>
    <property type="evidence" value="ECO:0000266"/>
    <property type="project" value="PomBase"/>
</dbReference>
<dbReference type="Gene3D" id="2.30.30.190">
    <property type="entry name" value="CAP Gly-rich-like domain"/>
    <property type="match status" value="1"/>
</dbReference>
<dbReference type="Gene3D" id="3.10.20.90">
    <property type="entry name" value="Phosphatidylinositol 3-kinase Catalytic Subunit, Chain A, domain 1"/>
    <property type="match status" value="1"/>
</dbReference>
<dbReference type="InterPro" id="IPR036859">
    <property type="entry name" value="CAP-Gly_dom_sf"/>
</dbReference>
<dbReference type="InterPro" id="IPR000938">
    <property type="entry name" value="CAP-Gly_domain"/>
</dbReference>
<dbReference type="InterPro" id="IPR000626">
    <property type="entry name" value="Ubiquitin-like_dom"/>
</dbReference>
<dbReference type="InterPro" id="IPR029071">
    <property type="entry name" value="Ubiquitin-like_domsf"/>
</dbReference>
<dbReference type="PANTHER" id="PTHR18916">
    <property type="entry name" value="DYNACTIN 1-RELATED MICROTUBULE-BINDING"/>
    <property type="match status" value="1"/>
</dbReference>
<dbReference type="PANTHER" id="PTHR18916:SF85">
    <property type="entry name" value="TUBULIN-FOLDING COFACTOR B"/>
    <property type="match status" value="1"/>
</dbReference>
<dbReference type="Pfam" id="PF01302">
    <property type="entry name" value="CAP_GLY"/>
    <property type="match status" value="1"/>
</dbReference>
<dbReference type="Pfam" id="PF14560">
    <property type="entry name" value="Ubiquitin_2"/>
    <property type="match status" value="1"/>
</dbReference>
<dbReference type="SMART" id="SM01052">
    <property type="entry name" value="CAP_GLY"/>
    <property type="match status" value="1"/>
</dbReference>
<dbReference type="SMART" id="SM00213">
    <property type="entry name" value="UBQ"/>
    <property type="match status" value="1"/>
</dbReference>
<dbReference type="SUPFAM" id="SSF74924">
    <property type="entry name" value="Cap-Gly domain"/>
    <property type="match status" value="1"/>
</dbReference>
<dbReference type="SUPFAM" id="SSF54236">
    <property type="entry name" value="Ubiquitin-like"/>
    <property type="match status" value="1"/>
</dbReference>
<dbReference type="PROSITE" id="PS00845">
    <property type="entry name" value="CAP_GLY_1"/>
    <property type="match status" value="1"/>
</dbReference>
<dbReference type="PROSITE" id="PS50245">
    <property type="entry name" value="CAP_GLY_2"/>
    <property type="match status" value="1"/>
</dbReference>
<dbReference type="PROSITE" id="PS50053">
    <property type="entry name" value="UBIQUITIN_2"/>
    <property type="match status" value="1"/>
</dbReference>
<feature type="chain" id="PRO_0000083512" description="Cell polarity protein alp11">
    <location>
        <begin position="1"/>
        <end position="234"/>
    </location>
</feature>
<feature type="domain" description="Ubiquitin-like" evidence="2">
    <location>
        <begin position="4"/>
        <end position="88"/>
    </location>
</feature>
<feature type="domain" description="CAP-Gly" evidence="1">
    <location>
        <begin position="174"/>
        <end position="216"/>
    </location>
</feature>
<feature type="modified residue" description="Phosphoserine" evidence="5">
    <location>
        <position position="213"/>
    </location>
</feature>
<evidence type="ECO:0000255" key="1">
    <source>
        <dbReference type="PROSITE-ProRule" id="PRU00045"/>
    </source>
</evidence>
<evidence type="ECO:0000255" key="2">
    <source>
        <dbReference type="PROSITE-ProRule" id="PRU00214"/>
    </source>
</evidence>
<evidence type="ECO:0000269" key="3">
    <source>
    </source>
</evidence>
<evidence type="ECO:0000269" key="4">
    <source>
    </source>
</evidence>
<evidence type="ECO:0000269" key="5">
    <source>
    </source>
</evidence>
<evidence type="ECO:0000305" key="6"/>
<gene>
    <name type="primary">alp11</name>
    <name type="ORF">SPAC13D6.05</name>
    <name type="ORF">SPAC4G9.01</name>
</gene>
<accession>Q10235</accession>
<accession>Q9UTM6</accession>
<comment type="function">
    <text evidence="3 4">Required for microtubule function and cell polarity. Involved in the proper folding of alpha-tubulin.</text>
</comment>
<comment type="subunit">
    <text evidence="3">Binds to monomeric alpha-tubulin. Interacts with alp21.</text>
</comment>
<comment type="subcellular location">
    <subcellularLocation>
        <location evidence="3">Cytoplasm</location>
        <location evidence="3">Cytoskeleton</location>
    </subcellularLocation>
</comment>
<comment type="similarity">
    <text evidence="6">Belongs to the TBCB family.</text>
</comment>
<reference key="1">
    <citation type="journal article" date="2000" name="Mol. Gen. Genet.">
        <title>Characterisation of fission yeast alp11 mutants defines three functional domains within tubulin-folding cofactor B.</title>
        <authorList>
            <person name="Radcliffe P.A."/>
            <person name="Toda T."/>
        </authorList>
    </citation>
    <scope>NUCLEOTIDE SEQUENCE [GENOMIC DNA]</scope>
    <scope>FUNCTION</scope>
</reference>
<reference key="2">
    <citation type="journal article" date="1999" name="Mol. Biol. Cell">
        <title>Functional dissection and hierarchy of tubulin-folding cofactor homologues in fission yeast.</title>
        <authorList>
            <person name="Radcliffe P.A."/>
            <person name="Hirata D."/>
            <person name="Vardy L."/>
            <person name="Toda T."/>
        </authorList>
    </citation>
    <scope>NUCLEOTIDE SEQUENCE [GENOMIC DNA]</scope>
    <scope>FUNCTION</scope>
    <scope>INTERACTION WITH ALPHA-TUBULIN AND ALP21</scope>
    <scope>SUBCELLULAR LOCATION</scope>
</reference>
<reference key="3">
    <citation type="journal article" date="2002" name="Nature">
        <title>The genome sequence of Schizosaccharomyces pombe.</title>
        <authorList>
            <person name="Wood V."/>
            <person name="Gwilliam R."/>
            <person name="Rajandream M.A."/>
            <person name="Lyne M.H."/>
            <person name="Lyne R."/>
            <person name="Stewart A."/>
            <person name="Sgouros J.G."/>
            <person name="Peat N."/>
            <person name="Hayles J."/>
            <person name="Baker S.G."/>
            <person name="Basham D."/>
            <person name="Bowman S."/>
            <person name="Brooks K."/>
            <person name="Brown D."/>
            <person name="Brown S."/>
            <person name="Chillingworth T."/>
            <person name="Churcher C.M."/>
            <person name="Collins M."/>
            <person name="Connor R."/>
            <person name="Cronin A."/>
            <person name="Davis P."/>
            <person name="Feltwell T."/>
            <person name="Fraser A."/>
            <person name="Gentles S."/>
            <person name="Goble A."/>
            <person name="Hamlin N."/>
            <person name="Harris D.E."/>
            <person name="Hidalgo J."/>
            <person name="Hodgson G."/>
            <person name="Holroyd S."/>
            <person name="Hornsby T."/>
            <person name="Howarth S."/>
            <person name="Huckle E.J."/>
            <person name="Hunt S."/>
            <person name="Jagels K."/>
            <person name="James K.D."/>
            <person name="Jones L."/>
            <person name="Jones M."/>
            <person name="Leather S."/>
            <person name="McDonald S."/>
            <person name="McLean J."/>
            <person name="Mooney P."/>
            <person name="Moule S."/>
            <person name="Mungall K.L."/>
            <person name="Murphy L.D."/>
            <person name="Niblett D."/>
            <person name="Odell C."/>
            <person name="Oliver K."/>
            <person name="O'Neil S."/>
            <person name="Pearson D."/>
            <person name="Quail M.A."/>
            <person name="Rabbinowitsch E."/>
            <person name="Rutherford K.M."/>
            <person name="Rutter S."/>
            <person name="Saunders D."/>
            <person name="Seeger K."/>
            <person name="Sharp S."/>
            <person name="Skelton J."/>
            <person name="Simmonds M.N."/>
            <person name="Squares R."/>
            <person name="Squares S."/>
            <person name="Stevens K."/>
            <person name="Taylor K."/>
            <person name="Taylor R.G."/>
            <person name="Tivey A."/>
            <person name="Walsh S.V."/>
            <person name="Warren T."/>
            <person name="Whitehead S."/>
            <person name="Woodward J.R."/>
            <person name="Volckaert G."/>
            <person name="Aert R."/>
            <person name="Robben J."/>
            <person name="Grymonprez B."/>
            <person name="Weltjens I."/>
            <person name="Vanstreels E."/>
            <person name="Rieger M."/>
            <person name="Schaefer M."/>
            <person name="Mueller-Auer S."/>
            <person name="Gabel C."/>
            <person name="Fuchs M."/>
            <person name="Duesterhoeft A."/>
            <person name="Fritzc C."/>
            <person name="Holzer E."/>
            <person name="Moestl D."/>
            <person name="Hilbert H."/>
            <person name="Borzym K."/>
            <person name="Langer I."/>
            <person name="Beck A."/>
            <person name="Lehrach H."/>
            <person name="Reinhardt R."/>
            <person name="Pohl T.M."/>
            <person name="Eger P."/>
            <person name="Zimmermann W."/>
            <person name="Wedler H."/>
            <person name="Wambutt R."/>
            <person name="Purnelle B."/>
            <person name="Goffeau A."/>
            <person name="Cadieu E."/>
            <person name="Dreano S."/>
            <person name="Gloux S."/>
            <person name="Lelaure V."/>
            <person name="Mottier S."/>
            <person name="Galibert F."/>
            <person name="Aves S.J."/>
            <person name="Xiang Z."/>
            <person name="Hunt C."/>
            <person name="Moore K."/>
            <person name="Hurst S.M."/>
            <person name="Lucas M."/>
            <person name="Rochet M."/>
            <person name="Gaillardin C."/>
            <person name="Tallada V.A."/>
            <person name="Garzon A."/>
            <person name="Thode G."/>
            <person name="Daga R.R."/>
            <person name="Cruzado L."/>
            <person name="Jimenez J."/>
            <person name="Sanchez M."/>
            <person name="del Rey F."/>
            <person name="Benito J."/>
            <person name="Dominguez A."/>
            <person name="Revuelta J.L."/>
            <person name="Moreno S."/>
            <person name="Armstrong J."/>
            <person name="Forsburg S.L."/>
            <person name="Cerutti L."/>
            <person name="Lowe T."/>
            <person name="McCombie W.R."/>
            <person name="Paulsen I."/>
            <person name="Potashkin J."/>
            <person name="Shpakovski G.V."/>
            <person name="Ussery D."/>
            <person name="Barrell B.G."/>
            <person name="Nurse P."/>
        </authorList>
    </citation>
    <scope>NUCLEOTIDE SEQUENCE [LARGE SCALE GENOMIC DNA]</scope>
    <source>
        <strain>972 / ATCC 24843</strain>
    </source>
</reference>
<reference key="4">
    <citation type="journal article" date="2008" name="J. Proteome Res.">
        <title>Phosphoproteome analysis of fission yeast.</title>
        <authorList>
            <person name="Wilson-Grady J.T."/>
            <person name="Villen J."/>
            <person name="Gygi S.P."/>
        </authorList>
    </citation>
    <scope>PHOSPHORYLATION [LARGE SCALE ANALYSIS] AT SER-213</scope>
    <scope>IDENTIFICATION BY MASS SPECTROMETRY</scope>
</reference>
<keyword id="KW-0143">Chaperone</keyword>
<keyword id="KW-0963">Cytoplasm</keyword>
<keyword id="KW-0206">Cytoskeleton</keyword>
<keyword id="KW-0493">Microtubule</keyword>
<keyword id="KW-0597">Phosphoprotein</keyword>
<keyword id="KW-1185">Reference proteome</keyword>